<keyword id="KW-0456">Lyase</keyword>
<keyword id="KW-0501">Molybdenum cofactor biosynthesis</keyword>
<name>MOAC_SINMW</name>
<protein>
    <recommendedName>
        <fullName evidence="1">Cyclic pyranopterin monophosphate synthase</fullName>
        <ecNumber evidence="1">4.6.1.17</ecNumber>
    </recommendedName>
    <alternativeName>
        <fullName evidence="1">Molybdenum cofactor biosynthesis protein C</fullName>
    </alternativeName>
</protein>
<comment type="function">
    <text evidence="1">Catalyzes the conversion of (8S)-3',8-cyclo-7,8-dihydroguanosine 5'-triphosphate to cyclic pyranopterin monophosphate (cPMP).</text>
</comment>
<comment type="catalytic activity">
    <reaction evidence="1">
        <text>(8S)-3',8-cyclo-7,8-dihydroguanosine 5'-triphosphate = cyclic pyranopterin phosphate + diphosphate</text>
        <dbReference type="Rhea" id="RHEA:49580"/>
        <dbReference type="ChEBI" id="CHEBI:33019"/>
        <dbReference type="ChEBI" id="CHEBI:59648"/>
        <dbReference type="ChEBI" id="CHEBI:131766"/>
        <dbReference type="EC" id="4.6.1.17"/>
    </reaction>
</comment>
<comment type="pathway">
    <text evidence="1">Cofactor biosynthesis; molybdopterin biosynthesis.</text>
</comment>
<comment type="subunit">
    <text evidence="1">Homohexamer; trimer of dimers.</text>
</comment>
<comment type="similarity">
    <text evidence="1">Belongs to the MoaC family.</text>
</comment>
<gene>
    <name evidence="1" type="primary">moaC</name>
    <name type="ordered locus">Smed_1410</name>
</gene>
<dbReference type="EC" id="4.6.1.17" evidence="1"/>
<dbReference type="EMBL" id="CP000738">
    <property type="protein sequence ID" value="ABR60256.1"/>
    <property type="molecule type" value="Genomic_DNA"/>
</dbReference>
<dbReference type="RefSeq" id="WP_011975566.1">
    <property type="nucleotide sequence ID" value="NC_009636.1"/>
</dbReference>
<dbReference type="RefSeq" id="YP_001327091.1">
    <property type="nucleotide sequence ID" value="NC_009636.1"/>
</dbReference>
<dbReference type="SMR" id="A6U9C6"/>
<dbReference type="STRING" id="366394.Smed_1410"/>
<dbReference type="GeneID" id="61612638"/>
<dbReference type="KEGG" id="smd:Smed_1410"/>
<dbReference type="PATRIC" id="fig|366394.8.peg.4539"/>
<dbReference type="eggNOG" id="COG0315">
    <property type="taxonomic scope" value="Bacteria"/>
</dbReference>
<dbReference type="HOGENOM" id="CLU_074693_1_1_5"/>
<dbReference type="OrthoDB" id="9794429at2"/>
<dbReference type="UniPathway" id="UPA00344"/>
<dbReference type="Proteomes" id="UP000001108">
    <property type="component" value="Chromosome"/>
</dbReference>
<dbReference type="GO" id="GO:0061799">
    <property type="term" value="F:cyclic pyranopterin monophosphate synthase activity"/>
    <property type="evidence" value="ECO:0007669"/>
    <property type="project" value="UniProtKB-UniRule"/>
</dbReference>
<dbReference type="GO" id="GO:0006777">
    <property type="term" value="P:Mo-molybdopterin cofactor biosynthetic process"/>
    <property type="evidence" value="ECO:0007669"/>
    <property type="project" value="UniProtKB-UniRule"/>
</dbReference>
<dbReference type="CDD" id="cd01420">
    <property type="entry name" value="MoaC_PE"/>
    <property type="match status" value="1"/>
</dbReference>
<dbReference type="FunFam" id="3.30.70.640:FF:000001">
    <property type="entry name" value="Cyclic pyranopterin monophosphate synthase"/>
    <property type="match status" value="1"/>
</dbReference>
<dbReference type="Gene3D" id="3.30.70.640">
    <property type="entry name" value="Molybdopterin cofactor biosynthesis C (MoaC) domain"/>
    <property type="match status" value="1"/>
</dbReference>
<dbReference type="HAMAP" id="MF_01224_B">
    <property type="entry name" value="MoaC_B"/>
    <property type="match status" value="1"/>
</dbReference>
<dbReference type="InterPro" id="IPR023045">
    <property type="entry name" value="MoaC"/>
</dbReference>
<dbReference type="InterPro" id="IPR047594">
    <property type="entry name" value="MoaC_bact/euk"/>
</dbReference>
<dbReference type="InterPro" id="IPR036522">
    <property type="entry name" value="MoaC_sf"/>
</dbReference>
<dbReference type="InterPro" id="IPR050105">
    <property type="entry name" value="MoCo_biosynth_MoaA/MoaC"/>
</dbReference>
<dbReference type="InterPro" id="IPR002820">
    <property type="entry name" value="Mopterin_CF_biosynth-C_dom"/>
</dbReference>
<dbReference type="NCBIfam" id="TIGR00581">
    <property type="entry name" value="moaC"/>
    <property type="match status" value="1"/>
</dbReference>
<dbReference type="NCBIfam" id="NF006870">
    <property type="entry name" value="PRK09364.1"/>
    <property type="match status" value="1"/>
</dbReference>
<dbReference type="PANTHER" id="PTHR22960">
    <property type="entry name" value="MOLYBDOPTERIN COFACTOR SYNTHESIS PROTEIN A"/>
    <property type="match status" value="1"/>
</dbReference>
<dbReference type="Pfam" id="PF01967">
    <property type="entry name" value="MoaC"/>
    <property type="match status" value="1"/>
</dbReference>
<dbReference type="SUPFAM" id="SSF55040">
    <property type="entry name" value="Molybdenum cofactor biosynthesis protein C, MoaC"/>
    <property type="match status" value="1"/>
</dbReference>
<feature type="chain" id="PRO_1000054147" description="Cyclic pyranopterin monophosphate synthase">
    <location>
        <begin position="1"/>
        <end position="164"/>
    </location>
</feature>
<feature type="active site" evidence="1">
    <location>
        <position position="130"/>
    </location>
</feature>
<feature type="binding site" evidence="1">
    <location>
        <begin position="77"/>
        <end position="79"/>
    </location>
    <ligand>
        <name>substrate</name>
    </ligand>
</feature>
<feature type="binding site" evidence="1">
    <location>
        <begin position="115"/>
        <end position="116"/>
    </location>
    <ligand>
        <name>substrate</name>
    </ligand>
</feature>
<accession>A6U9C6</accession>
<evidence type="ECO:0000255" key="1">
    <source>
        <dbReference type="HAMAP-Rule" id="MF_01224"/>
    </source>
</evidence>
<proteinExistence type="inferred from homology"/>
<reference key="1">
    <citation type="submission" date="2007-06" db="EMBL/GenBank/DDBJ databases">
        <title>Complete sequence of Sinorhizobium medicae WSM419 chromosome.</title>
        <authorList>
            <consortium name="US DOE Joint Genome Institute"/>
            <person name="Copeland A."/>
            <person name="Lucas S."/>
            <person name="Lapidus A."/>
            <person name="Barry K."/>
            <person name="Glavina del Rio T."/>
            <person name="Dalin E."/>
            <person name="Tice H."/>
            <person name="Pitluck S."/>
            <person name="Chain P."/>
            <person name="Malfatti S."/>
            <person name="Shin M."/>
            <person name="Vergez L."/>
            <person name="Schmutz J."/>
            <person name="Larimer F."/>
            <person name="Land M."/>
            <person name="Hauser L."/>
            <person name="Kyrpides N."/>
            <person name="Mikhailova N."/>
            <person name="Reeve W.G."/>
            <person name="Richardson P."/>
        </authorList>
    </citation>
    <scope>NUCLEOTIDE SEQUENCE [LARGE SCALE GENOMIC DNA]</scope>
    <source>
        <strain>WSM419</strain>
    </source>
</reference>
<sequence length="164" mass="17259">MSGPALTHIDSAGEASMVDVGDKTETVRVAVAEGFVRMKPETLALIREGNAKKGDVIATARLAGIMAAKQTSSLIPLCHPLMLTKVSVEIAPDDALPGLRVEAMAKLTGRTGVEMEALTAVSVACLTIYDMAKAADRDMEIGGVRLVSKSGGRSGDYRREGDMR</sequence>
<organism>
    <name type="scientific">Sinorhizobium medicae (strain WSM419)</name>
    <name type="common">Ensifer medicae</name>
    <dbReference type="NCBI Taxonomy" id="366394"/>
    <lineage>
        <taxon>Bacteria</taxon>
        <taxon>Pseudomonadati</taxon>
        <taxon>Pseudomonadota</taxon>
        <taxon>Alphaproteobacteria</taxon>
        <taxon>Hyphomicrobiales</taxon>
        <taxon>Rhizobiaceae</taxon>
        <taxon>Sinorhizobium/Ensifer group</taxon>
        <taxon>Sinorhizobium</taxon>
    </lineage>
</organism>